<organism>
    <name type="scientific">Variola virus</name>
    <dbReference type="NCBI Taxonomy" id="10255"/>
    <lineage>
        <taxon>Viruses</taxon>
        <taxon>Varidnaviria</taxon>
        <taxon>Bamfordvirae</taxon>
        <taxon>Nucleocytoviricota</taxon>
        <taxon>Pokkesviricetes</taxon>
        <taxon>Chitovirales</taxon>
        <taxon>Poxviridae</taxon>
        <taxon>Chordopoxvirinae</taxon>
        <taxon>Orthopoxvirus</taxon>
    </lineage>
</organism>
<organismHost>
    <name type="scientific">Homo sapiens</name>
    <name type="common">Human</name>
    <dbReference type="NCBI Taxonomy" id="9606"/>
</organismHost>
<gene>
    <name type="primary">OPG171</name>
    <name type="ORF">A42R</name>
    <name type="ORF">A45R</name>
    <name type="ORF">A47R</name>
    <name type="ORF">A50R</name>
</gene>
<protein>
    <recommendedName>
        <fullName>Profilin</fullName>
    </recommendedName>
</protein>
<evidence type="ECO:0000250" key="1"/>
<evidence type="ECO:0000305" key="2"/>
<sequence length="133" mass="14989">MAEWHKIIEDISKNNNFEDAAIVDYKTTKNVLAAIPNRTFAKINPGEVIPLITNHNILKPLIGQKFCIVYTNSLMDENTYAMELLTGYAPVSPIVIARTHTALIFLMGKPTTSRRDVYRTCRDHATRVRATGN</sequence>
<proteinExistence type="inferred from homology"/>
<comment type="function">
    <text evidence="1">Participates in either intracellular transport of viral proteins or intercellular spread of the virus. Cellular profilins modulate actin filament dynamics (polymerization and depolymerization) via direct binding to actin through an actin-binding domain as well as by modulation of other actin-binding proteins. In contrast to cellular homologs, the poxvirus profilins seem to bind actin only weakly (By similarity).</text>
</comment>
<comment type="subunit">
    <text evidence="1">Interacts with host TPM1. Interacts with protein A25 (By similarity).</text>
</comment>
<comment type="subcellular location">
    <subcellularLocation>
        <location>Host cytoplasm</location>
    </subcellularLocation>
    <text>Localizes to inclusion bodies formed by viral A25/ATI protein in the cytoplasm of the host cell.</text>
</comment>
<comment type="similarity">
    <text evidence="2">Belongs to the profilin family.</text>
</comment>
<name>PROF_VARV</name>
<keyword id="KW-0009">Actin-binding</keyword>
<keyword id="KW-1178">Actin-dependent inwards viral transport</keyword>
<keyword id="KW-1176">Cytoplasmic inwards viral transport</keyword>
<keyword id="KW-1035">Host cytoplasm</keyword>
<keyword id="KW-0945">Host-virus interaction</keyword>
<keyword id="KW-1160">Virus entry into host cell</keyword>
<dbReference type="EMBL" id="L22579">
    <property type="protein sequence ID" value="AAA60897.1"/>
    <property type="molecule type" value="Genomic_DNA"/>
</dbReference>
<dbReference type="EMBL" id="Y16780">
    <property type="protein sequence ID" value="CAB54753.1"/>
    <property type="molecule type" value="Genomic_DNA"/>
</dbReference>
<dbReference type="PIR" id="C36853">
    <property type="entry name" value="C36853"/>
</dbReference>
<dbReference type="RefSeq" id="NP_042197.1">
    <property type="nucleotide sequence ID" value="NC_001611.1"/>
</dbReference>
<dbReference type="SMR" id="P0DSW6"/>
<dbReference type="GeneID" id="1486528"/>
<dbReference type="KEGG" id="vg:1486528"/>
<dbReference type="Proteomes" id="UP000111493">
    <property type="component" value="Segment"/>
</dbReference>
<dbReference type="Proteomes" id="UP000119805">
    <property type="component" value="Segment"/>
</dbReference>
<dbReference type="GO" id="GO:0043657">
    <property type="term" value="C:host cell"/>
    <property type="evidence" value="ECO:0007669"/>
    <property type="project" value="GOC"/>
</dbReference>
<dbReference type="GO" id="GO:0030430">
    <property type="term" value="C:host cell cytoplasm"/>
    <property type="evidence" value="ECO:0007669"/>
    <property type="project" value="UniProtKB-SubCell"/>
</dbReference>
<dbReference type="GO" id="GO:0003779">
    <property type="term" value="F:actin binding"/>
    <property type="evidence" value="ECO:0007669"/>
    <property type="project" value="UniProtKB-KW"/>
</dbReference>
<dbReference type="GO" id="GO:0039680">
    <property type="term" value="P:actin-dependent intracellular transport of virus towards nucleus"/>
    <property type="evidence" value="ECO:0007669"/>
    <property type="project" value="UniProtKB-KW"/>
</dbReference>
<dbReference type="GO" id="GO:0046718">
    <property type="term" value="P:symbiont entry into host cell"/>
    <property type="evidence" value="ECO:0007669"/>
    <property type="project" value="UniProtKB-KW"/>
</dbReference>
<dbReference type="Gene3D" id="3.30.450.30">
    <property type="entry name" value="Dynein light chain 2a, cytoplasmic"/>
    <property type="match status" value="1"/>
</dbReference>
<dbReference type="InterPro" id="IPR048278">
    <property type="entry name" value="PFN"/>
</dbReference>
<dbReference type="InterPro" id="IPR005455">
    <property type="entry name" value="PFN_euk"/>
</dbReference>
<dbReference type="InterPro" id="IPR036140">
    <property type="entry name" value="PFN_sf"/>
</dbReference>
<dbReference type="InterPro" id="IPR027310">
    <property type="entry name" value="Profilin_CS"/>
</dbReference>
<dbReference type="Pfam" id="PF00235">
    <property type="entry name" value="Profilin"/>
    <property type="match status" value="1"/>
</dbReference>
<dbReference type="SMART" id="SM00392">
    <property type="entry name" value="PROF"/>
    <property type="match status" value="1"/>
</dbReference>
<dbReference type="SUPFAM" id="SSF55770">
    <property type="entry name" value="Profilin (actin-binding protein)"/>
    <property type="match status" value="1"/>
</dbReference>
<dbReference type="PROSITE" id="PS00414">
    <property type="entry name" value="PROFILIN"/>
    <property type="match status" value="1"/>
</dbReference>
<feature type="chain" id="PRO_0000448117" description="Profilin">
    <location>
        <begin position="1"/>
        <end position="133"/>
    </location>
</feature>
<reference key="1">
    <citation type="journal article" date="1992" name="J. Gen. Virol.">
        <title>Nucleotide sequence of 21.8 kbp of variola major virus strain Harvey and comparison with vaccinia virus.</title>
        <authorList>
            <person name="Aguado B."/>
            <person name="Selmes I.P."/>
            <person name="Smith G.L."/>
        </authorList>
    </citation>
    <scope>NUCLEOTIDE SEQUENCE [GENOMIC DNA]</scope>
    <source>
        <strain>Harvey</strain>
    </source>
</reference>
<reference key="2">
    <citation type="journal article" date="1993" name="Nature">
        <title>Potential virulence determinants in terminal regions of variola smallpox virus genome.</title>
        <authorList>
            <person name="Massung R.F."/>
            <person name="Esposito J.J."/>
            <person name="Liu L.I."/>
            <person name="Qi J."/>
            <person name="Utterback T.R."/>
            <person name="Knight J.C."/>
            <person name="Aubin L."/>
            <person name="Yuran T.E."/>
            <person name="Parsons J.M."/>
            <person name="Loparev V.N."/>
            <person name="Selivanov N.A."/>
            <person name="Cavallaro K.F."/>
            <person name="Kerlavage A.R."/>
            <person name="Mahy B.W.J."/>
            <person name="Venter J.C."/>
        </authorList>
    </citation>
    <scope>NUCLEOTIDE SEQUENCE [GENOMIC DNA]</scope>
    <source>
        <strain>Bangladesh-1975</strain>
    </source>
</reference>
<reference key="3">
    <citation type="journal article" date="2000" name="Virology">
        <title>Alastrim smallpox variola minor virus genome DNA sequences.</title>
        <authorList>
            <person name="Shchelkunov S.N."/>
            <person name="Totmenin A.V."/>
            <person name="Loparev V.N."/>
            <person name="Safronov P.F."/>
            <person name="Gutorov V.V."/>
            <person name="Chizhikov V.E."/>
            <person name="Knight J.C."/>
            <person name="Parsons J.M."/>
            <person name="Massung R.F."/>
            <person name="Esposito J.J."/>
        </authorList>
    </citation>
    <scope>NUCLEOTIDE SEQUENCE [LARGE SCALE GENOMIC DNA]</scope>
    <source>
        <strain>Garcia-1966</strain>
    </source>
</reference>
<accession>P0DSW6</accession>
<accession>P33828</accession>
<accession>Q76PV8</accession>